<gene>
    <name evidence="1" type="primary">ygfZ</name>
    <name type="ordered locus">SPC_3108</name>
</gene>
<organism>
    <name type="scientific">Salmonella paratyphi C (strain RKS4594)</name>
    <dbReference type="NCBI Taxonomy" id="476213"/>
    <lineage>
        <taxon>Bacteria</taxon>
        <taxon>Pseudomonadati</taxon>
        <taxon>Pseudomonadota</taxon>
        <taxon>Gammaproteobacteria</taxon>
        <taxon>Enterobacterales</taxon>
        <taxon>Enterobacteriaceae</taxon>
        <taxon>Salmonella</taxon>
    </lineage>
</organism>
<accession>C0PY21</accession>
<evidence type="ECO:0000255" key="1">
    <source>
        <dbReference type="HAMAP-Rule" id="MF_01175"/>
    </source>
</evidence>
<protein>
    <recommendedName>
        <fullName evidence="1">tRNA-modifying protein YgfZ</fullName>
    </recommendedName>
</protein>
<dbReference type="EMBL" id="CP000857">
    <property type="protein sequence ID" value="ACN47195.1"/>
    <property type="molecule type" value="Genomic_DNA"/>
</dbReference>
<dbReference type="RefSeq" id="WP_000874173.1">
    <property type="nucleotide sequence ID" value="NC_012125.1"/>
</dbReference>
<dbReference type="SMR" id="C0PY21"/>
<dbReference type="KEGG" id="sei:SPC_3108"/>
<dbReference type="HOGENOM" id="CLU_007884_6_1_6"/>
<dbReference type="Proteomes" id="UP000001599">
    <property type="component" value="Chromosome"/>
</dbReference>
<dbReference type="GO" id="GO:0005737">
    <property type="term" value="C:cytoplasm"/>
    <property type="evidence" value="ECO:0007669"/>
    <property type="project" value="UniProtKB-SubCell"/>
</dbReference>
<dbReference type="GO" id="GO:0005542">
    <property type="term" value="F:folic acid binding"/>
    <property type="evidence" value="ECO:0007669"/>
    <property type="project" value="UniProtKB-UniRule"/>
</dbReference>
<dbReference type="GO" id="GO:0016226">
    <property type="term" value="P:iron-sulfur cluster assembly"/>
    <property type="evidence" value="ECO:0007669"/>
    <property type="project" value="TreeGrafter"/>
</dbReference>
<dbReference type="GO" id="GO:0009451">
    <property type="term" value="P:RNA modification"/>
    <property type="evidence" value="ECO:0007669"/>
    <property type="project" value="InterPro"/>
</dbReference>
<dbReference type="GO" id="GO:0008033">
    <property type="term" value="P:tRNA processing"/>
    <property type="evidence" value="ECO:0007669"/>
    <property type="project" value="UniProtKB-UniRule"/>
</dbReference>
<dbReference type="FunFam" id="2.40.30.160:FF:000001">
    <property type="entry name" value="tRNA-modifying protein YgfZ"/>
    <property type="match status" value="1"/>
</dbReference>
<dbReference type="FunFam" id="3.30.70.1400:FF:000002">
    <property type="entry name" value="tRNA-modifying protein YgfZ"/>
    <property type="match status" value="1"/>
</dbReference>
<dbReference type="FunFam" id="3.30.70.1630:FF:000001">
    <property type="entry name" value="tRNA-modifying protein YgfZ"/>
    <property type="match status" value="1"/>
</dbReference>
<dbReference type="Gene3D" id="2.40.30.160">
    <property type="match status" value="1"/>
</dbReference>
<dbReference type="Gene3D" id="3.30.70.1630">
    <property type="match status" value="1"/>
</dbReference>
<dbReference type="Gene3D" id="3.30.70.1400">
    <property type="entry name" value="Aminomethyltransferase beta-barrel domains"/>
    <property type="match status" value="1"/>
</dbReference>
<dbReference type="HAMAP" id="MF_01175">
    <property type="entry name" value="tRNA_modifying_YgfZ"/>
    <property type="match status" value="1"/>
</dbReference>
<dbReference type="InterPro" id="IPR029043">
    <property type="entry name" value="GcvT/YgfZ_C"/>
</dbReference>
<dbReference type="InterPro" id="IPR023758">
    <property type="entry name" value="tRNA-modifying_YgfZ"/>
</dbReference>
<dbReference type="InterPro" id="IPR045179">
    <property type="entry name" value="YgfZ/GcvT"/>
</dbReference>
<dbReference type="InterPro" id="IPR017703">
    <property type="entry name" value="YgfZ/GcvT_CS"/>
</dbReference>
<dbReference type="InterPro" id="IPR048451">
    <property type="entry name" value="YgfZ_barrel"/>
</dbReference>
<dbReference type="NCBIfam" id="NF007110">
    <property type="entry name" value="PRK09559.1"/>
    <property type="match status" value="1"/>
</dbReference>
<dbReference type="NCBIfam" id="TIGR03317">
    <property type="entry name" value="ygfZ_signature"/>
    <property type="match status" value="1"/>
</dbReference>
<dbReference type="PANTHER" id="PTHR22602">
    <property type="entry name" value="TRANSFERASE CAF17, MITOCHONDRIAL-RELATED"/>
    <property type="match status" value="1"/>
</dbReference>
<dbReference type="PANTHER" id="PTHR22602:SF0">
    <property type="entry name" value="TRANSFERASE CAF17, MITOCHONDRIAL-RELATED"/>
    <property type="match status" value="1"/>
</dbReference>
<dbReference type="Pfam" id="PF21130">
    <property type="entry name" value="YgfZ_barrel"/>
    <property type="match status" value="1"/>
</dbReference>
<dbReference type="SUPFAM" id="SSF101790">
    <property type="entry name" value="Aminomethyltransferase beta-barrel domain"/>
    <property type="match status" value="1"/>
</dbReference>
<dbReference type="SUPFAM" id="SSF103025">
    <property type="entry name" value="Folate-binding domain"/>
    <property type="match status" value="1"/>
</dbReference>
<feature type="chain" id="PRO_1000164412" description="tRNA-modifying protein YgfZ">
    <location>
        <begin position="1"/>
        <end position="326"/>
    </location>
</feature>
<feature type="binding site" evidence="1">
    <location>
        <position position="27"/>
    </location>
    <ligand>
        <name>folate</name>
        <dbReference type="ChEBI" id="CHEBI:62501"/>
    </ligand>
</feature>
<feature type="binding site" evidence="1">
    <location>
        <position position="189"/>
    </location>
    <ligand>
        <name>folate</name>
        <dbReference type="ChEBI" id="CHEBI:62501"/>
    </ligand>
</feature>
<proteinExistence type="inferred from homology"/>
<name>YGFZ_SALPC</name>
<reference key="1">
    <citation type="journal article" date="2009" name="PLoS ONE">
        <title>Salmonella paratyphi C: genetic divergence from Salmonella choleraesuis and pathogenic convergence with Salmonella typhi.</title>
        <authorList>
            <person name="Liu W.-Q."/>
            <person name="Feng Y."/>
            <person name="Wang Y."/>
            <person name="Zou Q.-H."/>
            <person name="Chen F."/>
            <person name="Guo J.-T."/>
            <person name="Peng Y.-H."/>
            <person name="Jin Y."/>
            <person name="Li Y.-G."/>
            <person name="Hu S.-N."/>
            <person name="Johnston R.N."/>
            <person name="Liu G.-R."/>
            <person name="Liu S.-L."/>
        </authorList>
    </citation>
    <scope>NUCLEOTIDE SEQUENCE [LARGE SCALE GENOMIC DNA]</scope>
    <source>
        <strain>RKS4594</strain>
    </source>
</reference>
<keyword id="KW-0963">Cytoplasm</keyword>
<keyword id="KW-0290">Folate-binding</keyword>
<keyword id="KW-0819">tRNA processing</keyword>
<comment type="function">
    <text evidence="1">Folate-binding protein involved in regulating the level of ATP-DnaA and in the modification of some tRNAs. It is probably a key factor in regulatory networks that act via tRNA modification, such as initiation of chromosomal replication.</text>
</comment>
<comment type="subcellular location">
    <subcellularLocation>
        <location evidence="1">Cytoplasm</location>
    </subcellularLocation>
</comment>
<comment type="similarity">
    <text evidence="1">Belongs to the tRNA-modifying YgfZ family.</text>
</comment>
<sequence>MAFISFPPRHPSSSARLPLTLIALDDWALSTITGVDSEKYIQGQVTADVSQMTEQQHLLAAHCDAKGKMWSTLRLFRERDGFAWIERRSVLEAQLTELKKYAVFSKVVIAPDDERVLLGVAGFQARAALANVFSVLPNSENQVVRDGASTLLWFEHPAERFLLVTDVATANMLTEKLHGEAELNNSQQWLALDIEAGIPAIDAANSGQFIPQATNLQALGGISFKKGCYTGQEMVARAKFRGANKRALWLLAGKASRVPEAGEDLELQMGENWRRTGAILAATQLDDGQLLVQAVMNNDLEAESVFRVRDDANTLHIVPLPYSLEE</sequence>